<accession>Q8REB0</accession>
<reference key="1">
    <citation type="journal article" date="2002" name="J. Bacteriol.">
        <title>Genome sequence and analysis of the oral bacterium Fusobacterium nucleatum strain ATCC 25586.</title>
        <authorList>
            <person name="Kapatral V."/>
            <person name="Anderson I."/>
            <person name="Ivanova N."/>
            <person name="Reznik G."/>
            <person name="Los T."/>
            <person name="Lykidis A."/>
            <person name="Bhattacharyya A."/>
            <person name="Bartman A."/>
            <person name="Gardner W."/>
            <person name="Grechkin G."/>
            <person name="Zhu L."/>
            <person name="Vasieva O."/>
            <person name="Chu L."/>
            <person name="Kogan Y."/>
            <person name="Chaga O."/>
            <person name="Goltsman E."/>
            <person name="Bernal A."/>
            <person name="Larsen N."/>
            <person name="D'Souza M."/>
            <person name="Walunas T."/>
            <person name="Pusch G."/>
            <person name="Haselkorn R."/>
            <person name="Fonstein M."/>
            <person name="Kyrpides N.C."/>
            <person name="Overbeek R."/>
        </authorList>
    </citation>
    <scope>NUCLEOTIDE SEQUENCE [LARGE SCALE GENOMIC DNA]</scope>
    <source>
        <strain>ATCC 25586 / DSM 15643 / BCRC 10681 / CIP 101130 / JCM 8532 / KCTC 2640 / LMG 13131 / VPI 4355</strain>
    </source>
</reference>
<comment type="function">
    <text evidence="1">Poorly processive, error-prone DNA polymerase involved in untargeted mutagenesis. Copies undamaged DNA at stalled replication forks, which arise in vivo from mismatched or misaligned primer ends. These misaligned primers can be extended by PolIV. Exhibits no 3'-5' exonuclease (proofreading) activity. May be involved in translesional synthesis, in conjunction with the beta clamp from PolIII.</text>
</comment>
<comment type="catalytic activity">
    <reaction evidence="1">
        <text>DNA(n) + a 2'-deoxyribonucleoside 5'-triphosphate = DNA(n+1) + diphosphate</text>
        <dbReference type="Rhea" id="RHEA:22508"/>
        <dbReference type="Rhea" id="RHEA-COMP:17339"/>
        <dbReference type="Rhea" id="RHEA-COMP:17340"/>
        <dbReference type="ChEBI" id="CHEBI:33019"/>
        <dbReference type="ChEBI" id="CHEBI:61560"/>
        <dbReference type="ChEBI" id="CHEBI:173112"/>
        <dbReference type="EC" id="2.7.7.7"/>
    </reaction>
</comment>
<comment type="cofactor">
    <cofactor evidence="1">
        <name>Mg(2+)</name>
        <dbReference type="ChEBI" id="CHEBI:18420"/>
    </cofactor>
    <text evidence="1">Binds 2 magnesium ions per subunit.</text>
</comment>
<comment type="subunit">
    <text evidence="1">Monomer.</text>
</comment>
<comment type="subcellular location">
    <subcellularLocation>
        <location evidence="1">Cytoplasm</location>
    </subcellularLocation>
</comment>
<comment type="similarity">
    <text evidence="1">Belongs to the DNA polymerase type-Y family.</text>
</comment>
<feature type="chain" id="PRO_0000173916" description="DNA polymerase IV">
    <location>
        <begin position="1"/>
        <end position="350"/>
    </location>
</feature>
<feature type="domain" description="UmuC" evidence="1">
    <location>
        <begin position="5"/>
        <end position="181"/>
    </location>
</feature>
<feature type="active site" evidence="1">
    <location>
        <position position="100"/>
    </location>
</feature>
<feature type="binding site" evidence="1">
    <location>
        <position position="9"/>
    </location>
    <ligand>
        <name>Mg(2+)</name>
        <dbReference type="ChEBI" id="CHEBI:18420"/>
    </ligand>
</feature>
<feature type="binding site" evidence="1">
    <location>
        <position position="99"/>
    </location>
    <ligand>
        <name>Mg(2+)</name>
        <dbReference type="ChEBI" id="CHEBI:18420"/>
    </ligand>
</feature>
<feature type="site" description="Substrate discrimination" evidence="1">
    <location>
        <position position="14"/>
    </location>
</feature>
<proteinExistence type="inferred from homology"/>
<sequence length="350" mass="41057">MERIIMHYDMDAFYASIEINRNPKLKNKPLVVGENIVTTASYEARKYDIHSAMKVSDAKLLCPKLIVLPVDKTEYIRISNEIHNLILKITNKVEFVATDEGYIDLTDVIKPENKKAFVIKFKQRIKELTNLTCSVGIGFNKLSAKIASDINKPFGFFIFENEEEFIKHISDKKIKIIPGVGKKFFEILKNDKIFYVKDIFKYPLDYLVKKYGKSRGENLYCSVRGIDFDEVEYQREIYSIGNEETFLIPLQNNSEIIREFNSLFEYTFERLLKNNVFTQSITIKMRYTSFKTYTKSKKLKFSTRSKDFLYNEMFELINSFEKEDEVRLLGVYFGDIKKSNLVQLALNKNL</sequence>
<name>DPO4_FUSNN</name>
<protein>
    <recommendedName>
        <fullName evidence="1">DNA polymerase IV</fullName>
        <shortName evidence="1">Pol IV</shortName>
        <ecNumber evidence="1">2.7.7.7</ecNumber>
    </recommendedName>
</protein>
<organism>
    <name type="scientific">Fusobacterium nucleatum subsp. nucleatum (strain ATCC 25586 / DSM 15643 / BCRC 10681 / CIP 101130 / JCM 8532 / KCTC 2640 / LMG 13131 / VPI 4355)</name>
    <dbReference type="NCBI Taxonomy" id="190304"/>
    <lineage>
        <taxon>Bacteria</taxon>
        <taxon>Fusobacteriati</taxon>
        <taxon>Fusobacteriota</taxon>
        <taxon>Fusobacteriia</taxon>
        <taxon>Fusobacteriales</taxon>
        <taxon>Fusobacteriaceae</taxon>
        <taxon>Fusobacterium</taxon>
    </lineage>
</organism>
<gene>
    <name evidence="1" type="primary">dinB</name>
    <name type="ordered locus">FN1199</name>
</gene>
<evidence type="ECO:0000255" key="1">
    <source>
        <dbReference type="HAMAP-Rule" id="MF_01113"/>
    </source>
</evidence>
<dbReference type="EC" id="2.7.7.7" evidence="1"/>
<dbReference type="EMBL" id="AE009951">
    <property type="protein sequence ID" value="AAL95395.1"/>
    <property type="molecule type" value="Genomic_DNA"/>
</dbReference>
<dbReference type="RefSeq" id="NP_604096.1">
    <property type="nucleotide sequence ID" value="NC_003454.1"/>
</dbReference>
<dbReference type="RefSeq" id="WP_011016984.1">
    <property type="nucleotide sequence ID" value="NZ_CP028101.1"/>
</dbReference>
<dbReference type="SMR" id="Q8REB0"/>
<dbReference type="FunCoup" id="Q8REB0">
    <property type="interactions" value="346"/>
</dbReference>
<dbReference type="STRING" id="190304.FN1199"/>
<dbReference type="PaxDb" id="190304-FN1199"/>
<dbReference type="EnsemblBacteria" id="AAL95395">
    <property type="protein sequence ID" value="AAL95395"/>
    <property type="gene ID" value="FN1199"/>
</dbReference>
<dbReference type="GeneID" id="79784176"/>
<dbReference type="KEGG" id="fnu:FN1199"/>
<dbReference type="PATRIC" id="fig|190304.8.peg.1762"/>
<dbReference type="eggNOG" id="COG0389">
    <property type="taxonomic scope" value="Bacteria"/>
</dbReference>
<dbReference type="HOGENOM" id="CLU_012348_1_1_0"/>
<dbReference type="InParanoid" id="Q8REB0"/>
<dbReference type="BioCyc" id="FNUC190304:G1FZS-1776-MONOMER"/>
<dbReference type="Proteomes" id="UP000002521">
    <property type="component" value="Chromosome"/>
</dbReference>
<dbReference type="GO" id="GO:0005737">
    <property type="term" value="C:cytoplasm"/>
    <property type="evidence" value="ECO:0007669"/>
    <property type="project" value="UniProtKB-SubCell"/>
</dbReference>
<dbReference type="GO" id="GO:0003684">
    <property type="term" value="F:damaged DNA binding"/>
    <property type="evidence" value="ECO:0007669"/>
    <property type="project" value="InterPro"/>
</dbReference>
<dbReference type="GO" id="GO:0003887">
    <property type="term" value="F:DNA-directed DNA polymerase activity"/>
    <property type="evidence" value="ECO:0000318"/>
    <property type="project" value="GO_Central"/>
</dbReference>
<dbReference type="GO" id="GO:0000287">
    <property type="term" value="F:magnesium ion binding"/>
    <property type="evidence" value="ECO:0007669"/>
    <property type="project" value="UniProtKB-UniRule"/>
</dbReference>
<dbReference type="GO" id="GO:0006261">
    <property type="term" value="P:DNA-templated DNA replication"/>
    <property type="evidence" value="ECO:0007669"/>
    <property type="project" value="UniProtKB-UniRule"/>
</dbReference>
<dbReference type="GO" id="GO:0042276">
    <property type="term" value="P:error-prone translesion synthesis"/>
    <property type="evidence" value="ECO:0000318"/>
    <property type="project" value="GO_Central"/>
</dbReference>
<dbReference type="GO" id="GO:0009432">
    <property type="term" value="P:SOS response"/>
    <property type="evidence" value="ECO:0000318"/>
    <property type="project" value="GO_Central"/>
</dbReference>
<dbReference type="CDD" id="cd03586">
    <property type="entry name" value="PolY_Pol_IV_kappa"/>
    <property type="match status" value="1"/>
</dbReference>
<dbReference type="Gene3D" id="3.30.70.270">
    <property type="match status" value="1"/>
</dbReference>
<dbReference type="Gene3D" id="3.40.1170.60">
    <property type="match status" value="1"/>
</dbReference>
<dbReference type="Gene3D" id="1.10.150.20">
    <property type="entry name" value="5' to 3' exonuclease, C-terminal subdomain"/>
    <property type="match status" value="1"/>
</dbReference>
<dbReference type="Gene3D" id="3.30.1490.100">
    <property type="entry name" value="DNA polymerase, Y-family, little finger domain"/>
    <property type="match status" value="1"/>
</dbReference>
<dbReference type="HAMAP" id="MF_01113">
    <property type="entry name" value="DNApol_IV"/>
    <property type="match status" value="1"/>
</dbReference>
<dbReference type="InterPro" id="IPR043502">
    <property type="entry name" value="DNA/RNA_pol_sf"/>
</dbReference>
<dbReference type="InterPro" id="IPR036775">
    <property type="entry name" value="DNA_pol_Y-fam_lit_finger_sf"/>
</dbReference>
<dbReference type="InterPro" id="IPR017961">
    <property type="entry name" value="DNA_pol_Y-fam_little_finger"/>
</dbReference>
<dbReference type="InterPro" id="IPR050116">
    <property type="entry name" value="DNA_polymerase-Y"/>
</dbReference>
<dbReference type="InterPro" id="IPR022880">
    <property type="entry name" value="DNApol_IV"/>
</dbReference>
<dbReference type="InterPro" id="IPR043128">
    <property type="entry name" value="Rev_trsase/Diguanyl_cyclase"/>
</dbReference>
<dbReference type="InterPro" id="IPR001126">
    <property type="entry name" value="UmuC"/>
</dbReference>
<dbReference type="NCBIfam" id="NF002677">
    <property type="entry name" value="PRK02406.1"/>
    <property type="match status" value="1"/>
</dbReference>
<dbReference type="PANTHER" id="PTHR11076:SF33">
    <property type="entry name" value="DNA POLYMERASE KAPPA"/>
    <property type="match status" value="1"/>
</dbReference>
<dbReference type="PANTHER" id="PTHR11076">
    <property type="entry name" value="DNA REPAIR POLYMERASE UMUC / TRANSFERASE FAMILY MEMBER"/>
    <property type="match status" value="1"/>
</dbReference>
<dbReference type="Pfam" id="PF00817">
    <property type="entry name" value="IMS"/>
    <property type="match status" value="1"/>
</dbReference>
<dbReference type="Pfam" id="PF11799">
    <property type="entry name" value="IMS_C"/>
    <property type="match status" value="1"/>
</dbReference>
<dbReference type="SUPFAM" id="SSF56672">
    <property type="entry name" value="DNA/RNA polymerases"/>
    <property type="match status" value="1"/>
</dbReference>
<dbReference type="SUPFAM" id="SSF100879">
    <property type="entry name" value="Lesion bypass DNA polymerase (Y-family), little finger domain"/>
    <property type="match status" value="1"/>
</dbReference>
<dbReference type="PROSITE" id="PS50173">
    <property type="entry name" value="UMUC"/>
    <property type="match status" value="1"/>
</dbReference>
<keyword id="KW-0963">Cytoplasm</keyword>
<keyword id="KW-0227">DNA damage</keyword>
<keyword id="KW-0234">DNA repair</keyword>
<keyword id="KW-0235">DNA replication</keyword>
<keyword id="KW-0238">DNA-binding</keyword>
<keyword id="KW-0239">DNA-directed DNA polymerase</keyword>
<keyword id="KW-0460">Magnesium</keyword>
<keyword id="KW-0479">Metal-binding</keyword>
<keyword id="KW-0515">Mutator protein</keyword>
<keyword id="KW-0548">Nucleotidyltransferase</keyword>
<keyword id="KW-1185">Reference proteome</keyword>
<keyword id="KW-0808">Transferase</keyword>